<protein>
    <recommendedName>
        <fullName>Protein Ac102</fullName>
    </recommendedName>
    <alternativeName>
        <fullName>P12</fullName>
    </alternativeName>
</protein>
<gene>
    <name type="primary">Ac102</name>
</gene>
<organismHost>
    <name type="scientific">Lepidoptera</name>
    <name type="common">butterflies and moths</name>
    <dbReference type="NCBI Taxonomy" id="7088"/>
</organismHost>
<dbReference type="EMBL" id="L22858">
    <property type="protein sequence ID" value="AAA66732.1"/>
    <property type="molecule type" value="Genomic_DNA"/>
</dbReference>
<dbReference type="EMBL" id="U10885">
    <property type="protein sequence ID" value="AAB08768.1"/>
    <property type="molecule type" value="Genomic_DNA"/>
</dbReference>
<dbReference type="PIR" id="G72862">
    <property type="entry name" value="G72862"/>
</dbReference>
<dbReference type="KEGG" id="vg:1403935"/>
<dbReference type="OrthoDB" id="22125at10239"/>
<dbReference type="Proteomes" id="UP000008292">
    <property type="component" value="Segment"/>
</dbReference>
<dbReference type="GO" id="GO:0042025">
    <property type="term" value="C:host cell nucleus"/>
    <property type="evidence" value="ECO:0007669"/>
    <property type="project" value="UniProtKB-SubCell"/>
</dbReference>
<dbReference type="InterPro" id="IPR009477">
    <property type="entry name" value="Baculo_Ac102"/>
</dbReference>
<dbReference type="Pfam" id="PF06497">
    <property type="entry name" value="Baculo_Ac102"/>
    <property type="match status" value="1"/>
</dbReference>
<name>AC102_NPVAC</name>
<proteinExistence type="evidence at protein level"/>
<feature type="chain" id="PRO_0000133036" description="Protein Ac102">
    <location>
        <begin position="1"/>
        <end position="122"/>
    </location>
</feature>
<feature type="region of interest" description="Disordered" evidence="1">
    <location>
        <begin position="1"/>
        <end position="35"/>
    </location>
</feature>
<sequence length="122" mass="13335">MIASINDTDMDTDDNMSQARRNRRNRPPARPSAQTQMAAVDMLQTINTAASQTAASLLINDITPNKTESLKILSTQSVGARSLLEPMQANASTIKLNRIETVNVLDFLGSVYDNTIQVIVTE</sequence>
<keyword id="KW-1048">Host nucleus</keyword>
<keyword id="KW-0426">Late protein</keyword>
<keyword id="KW-1185">Reference proteome</keyword>
<accession>P41482</accession>
<organism>
    <name type="scientific">Autographa californica nuclear polyhedrosis virus</name>
    <name type="common">AcMNPV</name>
    <dbReference type="NCBI Taxonomy" id="46015"/>
    <lineage>
        <taxon>Viruses</taxon>
        <taxon>Viruses incertae sedis</taxon>
        <taxon>Naldaviricetes</taxon>
        <taxon>Lefavirales</taxon>
        <taxon>Baculoviridae</taxon>
        <taxon>Alphabaculovirus</taxon>
        <taxon>Alphabaculovirus aucalifornicae</taxon>
    </lineage>
</organism>
<comment type="function">
    <text evidence="2 3 4 5">Nucleocapsid protein that mediates the translocation of G-actin from the host cytoplasm to the nucleus, which is fundamental to infection. Participates in regulating nuclear actin polymerization as well as the morphogenesis and spatial distribution of viral capsid structures in the host nucleus. Suppresses 'Lys-48'-linked ubiquitination of the viral protein C42, thus forming a regulatory cascade with C42 to control P78/83 availability as an nucleation promoting factor (NPF).</text>
</comment>
<comment type="subunit">
    <text evidence="4 5">Interacts with protein C42; this interaction suppresses C42 'Lys-48'-linked-ubiquitination and subsequent proteasomal degradation. Interacts with proteins P78/83 and E27.</text>
</comment>
<comment type="subcellular location">
    <subcellularLocation>
        <location evidence="3 4">Host nucleus</location>
    </subcellularLocation>
</comment>
<reference key="1">
    <citation type="journal article" date="1994" name="Virology">
        <title>The complete DNA sequence of Autographa californica nuclear polyhedrosis virus.</title>
        <authorList>
            <person name="Ayres M.D."/>
            <person name="Howard S.C."/>
            <person name="Kuzio J."/>
            <person name="Lopez-Ferber M."/>
            <person name="Possee R.D."/>
        </authorList>
    </citation>
    <scope>NUCLEOTIDE SEQUENCE [LARGE SCALE GENOMIC DNA]</scope>
    <source>
        <strain>C6</strain>
    </source>
</reference>
<reference key="2">
    <citation type="submission" date="1994-06" db="EMBL/GenBank/DDBJ databases">
        <authorList>
            <person name="Lu A."/>
            <person name="Craig A."/>
            <person name="Carstens E.B."/>
        </authorList>
    </citation>
    <scope>NUCLEOTIDE SEQUENCE [GENOMIC DNA]</scope>
    <source>
        <strain>HR3</strain>
    </source>
</reference>
<reference key="3">
    <citation type="journal article" date="2002" name="J. Virol.">
        <title>Identification of six Autographa californica multicapsid nucleopolyhedrovirus early genes that mediate nuclear localization of G-actin.</title>
        <authorList>
            <person name="Ohkawa T."/>
            <person name="Rowe A.R."/>
            <person name="Volkman L.E."/>
        </authorList>
    </citation>
    <scope>FUNCTION</scope>
</reference>
<reference key="4">
    <citation type="journal article" date="2012" name="J. Gen. Virol.">
        <title>Nuclear localization of actin requires AC102 in Autographa californica multiple nucleopolyhedrovirus-infected cells.</title>
        <authorList>
            <person name="Gandhi K.M."/>
            <person name="Ohkawa T."/>
            <person name="Welch M.D."/>
            <person name="Volkman L.E."/>
        </authorList>
    </citation>
    <scope>FUNCTION</scope>
    <scope>SUBCELLULAR LOCATION</scope>
</reference>
<reference key="5">
    <citation type="journal article" date="2018" name="J. Virol.">
        <title>Baculovirus AC102 is a nucleocapsid protein that is crucial for nuclear actin polymerization and nucleocapsid morphogenesis.</title>
        <authorList>
            <person name="Hepp S.E."/>
            <person name="Borgo G.M."/>
            <person name="Ticau S."/>
            <person name="Ohkawa T."/>
            <person name="Welch M.D."/>
        </authorList>
    </citation>
    <scope>FUNCTION</scope>
    <scope>SUBCELLULAR LOCATION</scope>
    <scope>INTERACTION WITH PROTEIN C42; P78/83 AND E27</scope>
</reference>
<reference key="6">
    <citation type="journal article" date="2018" name="J. Virol.">
        <title>Ac102 Participates in Nuclear Actin Polymerization by Modulating BV/ODV-C42 Ubiquitination during Autographa californica Multiple Nucleopolyhedrovirus Infection.</title>
        <authorList>
            <person name="Zhang Y."/>
            <person name="Hu X."/>
            <person name="Mu J."/>
            <person name="Hu Y."/>
            <person name="Zhou Y."/>
            <person name="Zhao H."/>
            <person name="Wu C."/>
            <person name="Pei R."/>
            <person name="Chen J."/>
            <person name="Chen X."/>
            <person name="Wang Y."/>
        </authorList>
    </citation>
    <scope>FUNCTION</scope>
    <scope>INTERACTION WITH PROTEIN C42</scope>
</reference>
<evidence type="ECO:0000256" key="1">
    <source>
        <dbReference type="SAM" id="MobiDB-lite"/>
    </source>
</evidence>
<evidence type="ECO:0000269" key="2">
    <source>
    </source>
</evidence>
<evidence type="ECO:0000269" key="3">
    <source>
    </source>
</evidence>
<evidence type="ECO:0000269" key="4">
    <source>
    </source>
</evidence>
<evidence type="ECO:0000269" key="5">
    <source>
    </source>
</evidence>